<reference key="1">
    <citation type="journal article" date="1998" name="Nature">
        <title>Deciphering the biology of Mycobacterium tuberculosis from the complete genome sequence.</title>
        <authorList>
            <person name="Cole S.T."/>
            <person name="Brosch R."/>
            <person name="Parkhill J."/>
            <person name="Garnier T."/>
            <person name="Churcher C.M."/>
            <person name="Harris D.E."/>
            <person name="Gordon S.V."/>
            <person name="Eiglmeier K."/>
            <person name="Gas S."/>
            <person name="Barry C.E. III"/>
            <person name="Tekaia F."/>
            <person name="Badcock K."/>
            <person name="Basham D."/>
            <person name="Brown D."/>
            <person name="Chillingworth T."/>
            <person name="Connor R."/>
            <person name="Davies R.M."/>
            <person name="Devlin K."/>
            <person name="Feltwell T."/>
            <person name="Gentles S."/>
            <person name="Hamlin N."/>
            <person name="Holroyd S."/>
            <person name="Hornsby T."/>
            <person name="Jagels K."/>
            <person name="Krogh A."/>
            <person name="McLean J."/>
            <person name="Moule S."/>
            <person name="Murphy L.D."/>
            <person name="Oliver S."/>
            <person name="Osborne J."/>
            <person name="Quail M.A."/>
            <person name="Rajandream M.A."/>
            <person name="Rogers J."/>
            <person name="Rutter S."/>
            <person name="Seeger K."/>
            <person name="Skelton S."/>
            <person name="Squares S."/>
            <person name="Squares R."/>
            <person name="Sulston J.E."/>
            <person name="Taylor K."/>
            <person name="Whitehead S."/>
            <person name="Barrell B.G."/>
        </authorList>
    </citation>
    <scope>NUCLEOTIDE SEQUENCE [LARGE SCALE GENOMIC DNA]</scope>
    <source>
        <strain>ATCC 25618 / H37Rv</strain>
    </source>
</reference>
<reference key="2">
    <citation type="journal article" date="2004" name="J. Bacteriol.">
        <title>Transcription regulation by the Mycobacterium tuberculosis alternative sigma factor SigD and its role in virulence.</title>
        <authorList>
            <person name="Raman S."/>
            <person name="Hazra R."/>
            <person name="Dascher C.C."/>
            <person name="Husson R.N."/>
        </authorList>
    </citation>
    <scope>INDUCTION</scope>
    <source>
        <strain>ATCC 25618 / H37Rv</strain>
    </source>
</reference>
<reference key="3">
    <citation type="journal article" date="2011" name="Mol. Cell. Proteomics">
        <title>Proteogenomic analysis of Mycobacterium tuberculosis by high resolution mass spectrometry.</title>
        <authorList>
            <person name="Kelkar D.S."/>
            <person name="Kumar D."/>
            <person name="Kumar P."/>
            <person name="Balakrishnan L."/>
            <person name="Muthusamy B."/>
            <person name="Yadav A.K."/>
            <person name="Shrivastava P."/>
            <person name="Marimuthu A."/>
            <person name="Anand S."/>
            <person name="Sundaram H."/>
            <person name="Kingsbury R."/>
            <person name="Harsha H.C."/>
            <person name="Nair B."/>
            <person name="Prasad T.S."/>
            <person name="Chauhan D.S."/>
            <person name="Katoch K."/>
            <person name="Katoch V.M."/>
            <person name="Kumar P."/>
            <person name="Chaerkady R."/>
            <person name="Ramachandran S."/>
            <person name="Dash D."/>
            <person name="Pandey A."/>
        </authorList>
    </citation>
    <scope>IDENTIFICATION BY MASS SPECTROMETRY [LARGE SCALE ANALYSIS]</scope>
    <source>
        <strain>ATCC 25618 / H37Rv</strain>
    </source>
</reference>
<proteinExistence type="evidence at protein level"/>
<evidence type="ECO:0000255" key="1"/>
<evidence type="ECO:0000269" key="2">
    <source>
    </source>
</evidence>
<gene>
    <name type="ordered locus">Rv1815</name>
    <name type="ORF">MTCY1A11.28c</name>
</gene>
<sequence length="221" mass="22819">MVRLVPRAFAATVALLAAGFSPATASADPVLVFPGMEIRQDNHVCTLGYVDPALKIAFTAGHCRGGGAVTSRDYKVIGHLRAIRDNTPSGSTVATHELIADYEAIVLADDVTASNILPSGRALESRPGVVLHPGQAVCHFGVSTGETCGTVESVNNGWFTMSHGVLSEKGDSGGPVYLAPDGGPAQIVGIFNSVWGGFPAAVSWRSTSEQVHADLGVTPLA</sequence>
<name>Y1815_MYCTU</name>
<feature type="signal peptide" evidence="1">
    <location>
        <begin position="1"/>
        <end position="26"/>
    </location>
</feature>
<feature type="chain" id="PRO_0000014109" description="Uncharacterized protein Rv1815">
    <location>
        <begin position="27"/>
        <end position="221"/>
    </location>
</feature>
<dbReference type="EMBL" id="AL123456">
    <property type="protein sequence ID" value="CCP44581.1"/>
    <property type="molecule type" value="Genomic_DNA"/>
</dbReference>
<dbReference type="PIR" id="H70719">
    <property type="entry name" value="H70719"/>
</dbReference>
<dbReference type="RefSeq" id="NP_216331.1">
    <property type="nucleotide sequence ID" value="NC_000962.3"/>
</dbReference>
<dbReference type="RefSeq" id="WP_010886132.1">
    <property type="nucleotide sequence ID" value="NC_000962.3"/>
</dbReference>
<dbReference type="SMR" id="P9WLR9"/>
<dbReference type="STRING" id="83332.Rv1815"/>
<dbReference type="PaxDb" id="83332-Rv1815"/>
<dbReference type="DNASU" id="885430"/>
<dbReference type="GeneID" id="885430"/>
<dbReference type="KEGG" id="mtu:Rv1815"/>
<dbReference type="PATRIC" id="fig|83332.12.peg.2028"/>
<dbReference type="TubercuList" id="Rv1815"/>
<dbReference type="eggNOG" id="ENOG5030I04">
    <property type="taxonomic scope" value="Bacteria"/>
</dbReference>
<dbReference type="InParanoid" id="P9WLR9"/>
<dbReference type="OrthoDB" id="4519518at2"/>
<dbReference type="Proteomes" id="UP000001584">
    <property type="component" value="Chromosome"/>
</dbReference>
<dbReference type="GO" id="GO:0005576">
    <property type="term" value="C:extracellular region"/>
    <property type="evidence" value="ECO:0007005"/>
    <property type="project" value="MTBBASE"/>
</dbReference>
<dbReference type="GO" id="GO:0009274">
    <property type="term" value="C:peptidoglycan-based cell wall"/>
    <property type="evidence" value="ECO:0007005"/>
    <property type="project" value="MTBBASE"/>
</dbReference>
<dbReference type="Gene3D" id="2.40.10.10">
    <property type="entry name" value="Trypsin-like serine proteases"/>
    <property type="match status" value="2"/>
</dbReference>
<dbReference type="InterPro" id="IPR009003">
    <property type="entry name" value="Peptidase_S1_PA"/>
</dbReference>
<dbReference type="InterPro" id="IPR043504">
    <property type="entry name" value="Peptidase_S1_PA_chymotrypsin"/>
</dbReference>
<dbReference type="SUPFAM" id="SSF50494">
    <property type="entry name" value="Trypsin-like serine proteases"/>
    <property type="match status" value="1"/>
</dbReference>
<accession>P9WLR9</accession>
<accession>L0T9C2</accession>
<accession>Q50618</accession>
<protein>
    <recommendedName>
        <fullName>Uncharacterized protein Rv1815</fullName>
    </recommendedName>
</protein>
<comment type="induction">
    <text evidence="2">Positively regulated by alternative sigma factor SigD, probably directly.</text>
</comment>
<organism>
    <name type="scientific">Mycobacterium tuberculosis (strain ATCC 25618 / H37Rv)</name>
    <dbReference type="NCBI Taxonomy" id="83332"/>
    <lineage>
        <taxon>Bacteria</taxon>
        <taxon>Bacillati</taxon>
        <taxon>Actinomycetota</taxon>
        <taxon>Actinomycetes</taxon>
        <taxon>Mycobacteriales</taxon>
        <taxon>Mycobacteriaceae</taxon>
        <taxon>Mycobacterium</taxon>
        <taxon>Mycobacterium tuberculosis complex</taxon>
    </lineage>
</organism>
<keyword id="KW-1185">Reference proteome</keyword>
<keyword id="KW-0732">Signal</keyword>